<sequence>MTPWYLYLIRTADNALYTGITTDVARRYKQHQSGKGAKALRGKGELTLAFSAQVGERSLALRMEYRIKRLTKRQKERLVTEGEGFEALLASLQTPTLKSD</sequence>
<feature type="chain" id="PRO_0000328907" description="UPF0213 protein CKO_04549">
    <location>
        <begin position="1"/>
        <end position="100"/>
    </location>
</feature>
<feature type="domain" description="GIY-YIG" evidence="1">
    <location>
        <begin position="2"/>
        <end position="77"/>
    </location>
</feature>
<comment type="similarity">
    <text evidence="1">Belongs to the UPF0213 family.</text>
</comment>
<comment type="sequence caution" evidence="2">
    <conflict type="erroneous initiation">
        <sequence resource="EMBL-CDS" id="ABV15603"/>
    </conflict>
</comment>
<organism>
    <name type="scientific">Citrobacter koseri (strain ATCC BAA-895 / CDC 4225-83 / SGSC4696)</name>
    <dbReference type="NCBI Taxonomy" id="290338"/>
    <lineage>
        <taxon>Bacteria</taxon>
        <taxon>Pseudomonadati</taxon>
        <taxon>Pseudomonadota</taxon>
        <taxon>Gammaproteobacteria</taxon>
        <taxon>Enterobacterales</taxon>
        <taxon>Enterobacteriaceae</taxon>
        <taxon>Citrobacter</taxon>
    </lineage>
</organism>
<dbReference type="EMBL" id="CP000822">
    <property type="protein sequence ID" value="ABV15603.1"/>
    <property type="status" value="ALT_INIT"/>
    <property type="molecule type" value="Genomic_DNA"/>
</dbReference>
<dbReference type="RefSeq" id="WP_024130980.1">
    <property type="nucleotide sequence ID" value="NC_009792.1"/>
</dbReference>
<dbReference type="SMR" id="A8AQ40"/>
<dbReference type="STRING" id="290338.CKO_04549"/>
<dbReference type="GeneID" id="45138099"/>
<dbReference type="KEGG" id="cko:CKO_04549"/>
<dbReference type="HOGENOM" id="CLU_135650_0_1_6"/>
<dbReference type="OrthoDB" id="9797095at2"/>
<dbReference type="Proteomes" id="UP000008148">
    <property type="component" value="Chromosome"/>
</dbReference>
<dbReference type="CDD" id="cd10456">
    <property type="entry name" value="GIY-YIG_UPF0213"/>
    <property type="match status" value="1"/>
</dbReference>
<dbReference type="Gene3D" id="3.40.1440.10">
    <property type="entry name" value="GIY-YIG endonuclease"/>
    <property type="match status" value="1"/>
</dbReference>
<dbReference type="HAMAP" id="MF_01029">
    <property type="entry name" value="UPF0213"/>
    <property type="match status" value="1"/>
</dbReference>
<dbReference type="InterPro" id="IPR000305">
    <property type="entry name" value="GIY-YIG_endonuc"/>
</dbReference>
<dbReference type="InterPro" id="IPR035901">
    <property type="entry name" value="GIY-YIG_endonuc_sf"/>
</dbReference>
<dbReference type="InterPro" id="IPR050190">
    <property type="entry name" value="UPF0213_domain"/>
</dbReference>
<dbReference type="InterPro" id="IPR022992">
    <property type="entry name" value="UPF0213_GIY-YIG_endonuc"/>
</dbReference>
<dbReference type="PANTHER" id="PTHR34477">
    <property type="entry name" value="UPF0213 PROTEIN YHBQ"/>
    <property type="match status" value="1"/>
</dbReference>
<dbReference type="PANTHER" id="PTHR34477:SF1">
    <property type="entry name" value="UPF0213 PROTEIN YHBQ"/>
    <property type="match status" value="1"/>
</dbReference>
<dbReference type="Pfam" id="PF01541">
    <property type="entry name" value="GIY-YIG"/>
    <property type="match status" value="1"/>
</dbReference>
<dbReference type="SUPFAM" id="SSF82771">
    <property type="entry name" value="GIY-YIG endonuclease"/>
    <property type="match status" value="1"/>
</dbReference>
<dbReference type="PROSITE" id="PS50164">
    <property type="entry name" value="GIY_YIG"/>
    <property type="match status" value="1"/>
</dbReference>
<accession>A8AQ40</accession>
<reference key="1">
    <citation type="submission" date="2007-08" db="EMBL/GenBank/DDBJ databases">
        <authorList>
            <consortium name="The Citrobacter koseri Genome Sequencing Project"/>
            <person name="McClelland M."/>
            <person name="Sanderson E.K."/>
            <person name="Porwollik S."/>
            <person name="Spieth J."/>
            <person name="Clifton W.S."/>
            <person name="Latreille P."/>
            <person name="Courtney L."/>
            <person name="Wang C."/>
            <person name="Pepin K."/>
            <person name="Bhonagiri V."/>
            <person name="Nash W."/>
            <person name="Johnson M."/>
            <person name="Thiruvilangam P."/>
            <person name="Wilson R."/>
        </authorList>
    </citation>
    <scope>NUCLEOTIDE SEQUENCE [LARGE SCALE GENOMIC DNA]</scope>
    <source>
        <strain>ATCC BAA-895 / CDC 4225-83 / SGSC4696</strain>
    </source>
</reference>
<gene>
    <name type="ordered locus">CKO_04549</name>
</gene>
<evidence type="ECO:0000255" key="1">
    <source>
        <dbReference type="HAMAP-Rule" id="MF_01029"/>
    </source>
</evidence>
<evidence type="ECO:0000305" key="2"/>
<name>Y4549_CITK8</name>
<keyword id="KW-1185">Reference proteome</keyword>
<proteinExistence type="inferred from homology"/>
<protein>
    <recommendedName>
        <fullName evidence="1">UPF0213 protein CKO_04549</fullName>
    </recommendedName>
</protein>